<gene>
    <name type="primary">hoxd11a</name>
</gene>
<evidence type="ECO:0000250" key="1"/>
<evidence type="ECO:0000255" key="2">
    <source>
        <dbReference type="PROSITE-ProRule" id="PRU00108"/>
    </source>
</evidence>
<evidence type="ECO:0000256" key="3">
    <source>
        <dbReference type="SAM" id="MobiDB-lite"/>
    </source>
</evidence>
<evidence type="ECO:0000305" key="4"/>
<organism>
    <name type="scientific">Takifugu rubripes</name>
    <name type="common">Japanese pufferfish</name>
    <name type="synonym">Fugu rubripes</name>
    <dbReference type="NCBI Taxonomy" id="31033"/>
    <lineage>
        <taxon>Eukaryota</taxon>
        <taxon>Metazoa</taxon>
        <taxon>Chordata</taxon>
        <taxon>Craniata</taxon>
        <taxon>Vertebrata</taxon>
        <taxon>Euteleostomi</taxon>
        <taxon>Actinopterygii</taxon>
        <taxon>Neopterygii</taxon>
        <taxon>Teleostei</taxon>
        <taxon>Neoteleostei</taxon>
        <taxon>Acanthomorphata</taxon>
        <taxon>Eupercaria</taxon>
        <taxon>Tetraodontiformes</taxon>
        <taxon>Tetradontoidea</taxon>
        <taxon>Tetraodontidae</taxon>
        <taxon>Takifugu</taxon>
    </lineage>
</organism>
<reference key="1">
    <citation type="journal article" date="2006" name="Proc. Natl. Acad. Sci. U.S.A.">
        <title>Highly conserved syntenic blocks at the vertebrate Hox loci and conserved regulatory elements within and outside Hox gene clusters.</title>
        <authorList>
            <person name="Lee A.P."/>
            <person name="Koh E.G.L."/>
            <person name="Tay A."/>
            <person name="Brenner S."/>
            <person name="Venkatesh B."/>
        </authorList>
    </citation>
    <scope>NUCLEOTIDE SEQUENCE [GENOMIC DNA]</scope>
</reference>
<protein>
    <recommendedName>
        <fullName>Homeobox protein Hox-D11a</fullName>
    </recommendedName>
</protein>
<sequence>MYLPNCTYYVSTPDFTSSFLPQNTSCQINFPYSPNIAQVQPVREVAFRDYGLDHPSKWHYRGNYASYYSADELMHRDLLQSSSSRADVIFKNESLYSHRGGTSSPCNFFTGIGRNGVLPQGFDQFLDAPTSDKSTAEPLKQKTDCGVSGDTGSHRQALTKEDEHKDEVIGGVEEDSSSNCGDNNNQQNPPSRSRKKRCPYSKYQIRELEREFFFNVYINKEKRLQLSRMLNLSDRQVKIWFQNRRMKEKKLNRDRLQYFTGNPLF</sequence>
<keyword id="KW-0217">Developmental protein</keyword>
<keyword id="KW-0238">DNA-binding</keyword>
<keyword id="KW-0371">Homeobox</keyword>
<keyword id="KW-0539">Nucleus</keyword>
<keyword id="KW-1185">Reference proteome</keyword>
<keyword id="KW-0804">Transcription</keyword>
<keyword id="KW-0805">Transcription regulation</keyword>
<comment type="function">
    <text evidence="1">Sequence-specific transcription factor which is part of a developmental regulatory system that provides cells with specific positional identities on the anterior-posterior axis.</text>
</comment>
<comment type="subcellular location">
    <subcellularLocation>
        <location evidence="2">Nucleus</location>
    </subcellularLocation>
</comment>
<comment type="similarity">
    <text evidence="4">Belongs to the Abd-B homeobox family.</text>
</comment>
<name>HXDBA_TAKRU</name>
<feature type="chain" id="PRO_0000266000" description="Homeobox protein Hox-D11a">
    <location>
        <begin position="1"/>
        <end position="265"/>
    </location>
</feature>
<feature type="DNA-binding region" description="Homeobox" evidence="2">
    <location>
        <begin position="193"/>
        <end position="252"/>
    </location>
</feature>
<feature type="region of interest" description="Disordered" evidence="3">
    <location>
        <begin position="123"/>
        <end position="199"/>
    </location>
</feature>
<feature type="compositionally biased region" description="Basic and acidic residues" evidence="3">
    <location>
        <begin position="158"/>
        <end position="168"/>
    </location>
</feature>
<feature type="compositionally biased region" description="Polar residues" evidence="3">
    <location>
        <begin position="177"/>
        <end position="191"/>
    </location>
</feature>
<proteinExistence type="inferred from homology"/>
<accession>Q1KKT1</accession>
<dbReference type="EMBL" id="DQ481668">
    <property type="protein sequence ID" value="ABF22463.1"/>
    <property type="molecule type" value="Genomic_DNA"/>
</dbReference>
<dbReference type="SMR" id="Q1KKT1"/>
<dbReference type="STRING" id="31033.ENSTRUP00000044930"/>
<dbReference type="HOGENOM" id="CLU_079662_0_0_1"/>
<dbReference type="InParanoid" id="Q1KKT1"/>
<dbReference type="Proteomes" id="UP000005226">
    <property type="component" value="Unplaced"/>
</dbReference>
<dbReference type="GO" id="GO:0005654">
    <property type="term" value="C:nucleoplasm"/>
    <property type="evidence" value="ECO:0007669"/>
    <property type="project" value="UniProtKB-ARBA"/>
</dbReference>
<dbReference type="GO" id="GO:0000981">
    <property type="term" value="F:DNA-binding transcription factor activity, RNA polymerase II-specific"/>
    <property type="evidence" value="ECO:0007669"/>
    <property type="project" value="InterPro"/>
</dbReference>
<dbReference type="GO" id="GO:0000978">
    <property type="term" value="F:RNA polymerase II cis-regulatory region sequence-specific DNA binding"/>
    <property type="evidence" value="ECO:0007669"/>
    <property type="project" value="TreeGrafter"/>
</dbReference>
<dbReference type="CDD" id="cd00086">
    <property type="entry name" value="homeodomain"/>
    <property type="match status" value="1"/>
</dbReference>
<dbReference type="FunFam" id="1.10.10.60:FF:000166">
    <property type="entry name" value="homeobox protein Hox-C11"/>
    <property type="match status" value="1"/>
</dbReference>
<dbReference type="Gene3D" id="1.10.10.60">
    <property type="entry name" value="Homeodomain-like"/>
    <property type="match status" value="1"/>
</dbReference>
<dbReference type="InterPro" id="IPR021918">
    <property type="entry name" value="DUF3528"/>
</dbReference>
<dbReference type="InterPro" id="IPR001356">
    <property type="entry name" value="HD"/>
</dbReference>
<dbReference type="InterPro" id="IPR020479">
    <property type="entry name" value="HD_metazoa"/>
</dbReference>
<dbReference type="InterPro" id="IPR017970">
    <property type="entry name" value="Homeobox_CS"/>
</dbReference>
<dbReference type="InterPro" id="IPR009057">
    <property type="entry name" value="Homeodomain-like_sf"/>
</dbReference>
<dbReference type="PANTHER" id="PTHR46092">
    <property type="entry name" value="HOMEOBOX PROTEIN HOX-A11-RELATED"/>
    <property type="match status" value="1"/>
</dbReference>
<dbReference type="PANTHER" id="PTHR46092:SF2">
    <property type="entry name" value="HOMEOBOX PROTEIN HOX-D11"/>
    <property type="match status" value="1"/>
</dbReference>
<dbReference type="Pfam" id="PF12045">
    <property type="entry name" value="DUF3528"/>
    <property type="match status" value="1"/>
</dbReference>
<dbReference type="Pfam" id="PF00046">
    <property type="entry name" value="Homeodomain"/>
    <property type="match status" value="1"/>
</dbReference>
<dbReference type="PRINTS" id="PR00024">
    <property type="entry name" value="HOMEOBOX"/>
</dbReference>
<dbReference type="SMART" id="SM00389">
    <property type="entry name" value="HOX"/>
    <property type="match status" value="1"/>
</dbReference>
<dbReference type="SUPFAM" id="SSF46689">
    <property type="entry name" value="Homeodomain-like"/>
    <property type="match status" value="1"/>
</dbReference>
<dbReference type="PROSITE" id="PS00027">
    <property type="entry name" value="HOMEOBOX_1"/>
    <property type="match status" value="1"/>
</dbReference>
<dbReference type="PROSITE" id="PS50071">
    <property type="entry name" value="HOMEOBOX_2"/>
    <property type="match status" value="1"/>
</dbReference>